<proteinExistence type="inferred from homology"/>
<feature type="chain" id="PRO_0000302178" description="Large ribosomal subunit protein bL36">
    <location>
        <begin position="1"/>
        <end position="45"/>
    </location>
</feature>
<feature type="region of interest" description="Disordered" evidence="2">
    <location>
        <begin position="1"/>
        <end position="45"/>
    </location>
</feature>
<accession>Q3KKQ6</accession>
<gene>
    <name evidence="1" type="primary">rpmJ</name>
    <name type="ordered locus">CTA_0856</name>
</gene>
<evidence type="ECO:0000255" key="1">
    <source>
        <dbReference type="HAMAP-Rule" id="MF_00251"/>
    </source>
</evidence>
<evidence type="ECO:0000256" key="2">
    <source>
        <dbReference type="SAM" id="MobiDB-lite"/>
    </source>
</evidence>
<evidence type="ECO:0000305" key="3"/>
<comment type="similarity">
    <text evidence="1">Belongs to the bacterial ribosomal protein bL36 family.</text>
</comment>
<reference key="1">
    <citation type="journal article" date="2005" name="Infect. Immun.">
        <title>Comparative genomic analysis of Chlamydia trachomatis oculotropic and genitotropic strains.</title>
        <authorList>
            <person name="Carlson J.H."/>
            <person name="Porcella S.F."/>
            <person name="McClarty G."/>
            <person name="Caldwell H.D."/>
        </authorList>
    </citation>
    <scope>NUCLEOTIDE SEQUENCE [LARGE SCALE GENOMIC DNA]</scope>
    <source>
        <strain>ATCC VR-571B / DSM 19440 / HAR-13</strain>
    </source>
</reference>
<organism>
    <name type="scientific">Chlamydia trachomatis serovar A (strain ATCC VR-571B / DSM 19440 / HAR-13)</name>
    <dbReference type="NCBI Taxonomy" id="315277"/>
    <lineage>
        <taxon>Bacteria</taxon>
        <taxon>Pseudomonadati</taxon>
        <taxon>Chlamydiota</taxon>
        <taxon>Chlamydiia</taxon>
        <taxon>Chlamydiales</taxon>
        <taxon>Chlamydiaceae</taxon>
        <taxon>Chlamydia/Chlamydophila group</taxon>
        <taxon>Chlamydia</taxon>
    </lineage>
</organism>
<name>RL36_CHLTA</name>
<sequence>MRVSSSIKADPSKGDKLVRRKGRLYVINKKDPNRKQRQAGPARKK</sequence>
<protein>
    <recommendedName>
        <fullName evidence="1">Large ribosomal subunit protein bL36</fullName>
    </recommendedName>
    <alternativeName>
        <fullName evidence="3">50S ribosomal protein L36</fullName>
    </alternativeName>
</protein>
<dbReference type="EMBL" id="CP000051">
    <property type="protein sequence ID" value="AAX51066.1"/>
    <property type="molecule type" value="Genomic_DNA"/>
</dbReference>
<dbReference type="RefSeq" id="WP_009872166.1">
    <property type="nucleotide sequence ID" value="NC_007429.1"/>
</dbReference>
<dbReference type="SMR" id="Q3KKQ6"/>
<dbReference type="GeneID" id="93065661"/>
<dbReference type="KEGG" id="cta:CTA_0856"/>
<dbReference type="HOGENOM" id="CLU_135723_3_3_0"/>
<dbReference type="Proteomes" id="UP000002532">
    <property type="component" value="Chromosome"/>
</dbReference>
<dbReference type="GO" id="GO:1990904">
    <property type="term" value="C:ribonucleoprotein complex"/>
    <property type="evidence" value="ECO:0007669"/>
    <property type="project" value="UniProtKB-KW"/>
</dbReference>
<dbReference type="GO" id="GO:0005840">
    <property type="term" value="C:ribosome"/>
    <property type="evidence" value="ECO:0007669"/>
    <property type="project" value="UniProtKB-KW"/>
</dbReference>
<dbReference type="GO" id="GO:0003735">
    <property type="term" value="F:structural constituent of ribosome"/>
    <property type="evidence" value="ECO:0007669"/>
    <property type="project" value="InterPro"/>
</dbReference>
<dbReference type="GO" id="GO:0006412">
    <property type="term" value="P:translation"/>
    <property type="evidence" value="ECO:0007669"/>
    <property type="project" value="UniProtKB-UniRule"/>
</dbReference>
<dbReference type="HAMAP" id="MF_00251">
    <property type="entry name" value="Ribosomal_bL36"/>
    <property type="match status" value="1"/>
</dbReference>
<dbReference type="InterPro" id="IPR000473">
    <property type="entry name" value="Ribosomal_bL36"/>
</dbReference>
<dbReference type="InterPro" id="IPR035977">
    <property type="entry name" value="Ribosomal_bL36_sp"/>
</dbReference>
<dbReference type="NCBIfam" id="TIGR01022">
    <property type="entry name" value="rpmJ_bact"/>
    <property type="match status" value="1"/>
</dbReference>
<dbReference type="Pfam" id="PF00444">
    <property type="entry name" value="Ribosomal_L36"/>
    <property type="match status" value="1"/>
</dbReference>
<dbReference type="SUPFAM" id="SSF57840">
    <property type="entry name" value="Ribosomal protein L36"/>
    <property type="match status" value="1"/>
</dbReference>
<dbReference type="PROSITE" id="PS00828">
    <property type="entry name" value="RIBOSOMAL_L36"/>
    <property type="match status" value="1"/>
</dbReference>
<keyword id="KW-0687">Ribonucleoprotein</keyword>
<keyword id="KW-0689">Ribosomal protein</keyword>